<name>CA4A_CONST</name>
<accession>P0C828</accession>
<accession>P58921</accession>
<accession>Q8I6N6</accession>
<evidence type="ECO:0000255" key="1"/>
<evidence type="ECO:0000269" key="2">
    <source>
    </source>
</evidence>
<evidence type="ECO:0000269" key="3">
    <source>
    </source>
</evidence>
<evidence type="ECO:0000303" key="4">
    <source>
    </source>
</evidence>
<evidence type="ECO:0000303" key="5">
    <source>
    </source>
</evidence>
<evidence type="ECO:0000303" key="6">
    <source>
    </source>
</evidence>
<evidence type="ECO:0000303" key="7">
    <source>
    </source>
</evidence>
<evidence type="ECO:0000303" key="8">
    <source>
    </source>
</evidence>
<evidence type="ECO:0000305" key="9"/>
<evidence type="ECO:0000305" key="10">
    <source>
    </source>
</evidence>
<evidence type="ECO:0000305" key="11">
    <source>
    </source>
</evidence>
<comment type="function">
    <text evidence="2 3 10">Neurotoxin with probable activity on sodium channel (Probable). Induces intense repetitive firing of the frog neuromuscular junction, leading to a tetanic contracture in muscle fiber (spastic paralysis) (PubMed:17115716). In vivo, shows the same effect as the whole venom when injected on fish (PubMed:17115716). Intraperitoneal injection into fish induces a period of rapid swimming followed by a spastic paralysis with stiff fibrillating fins (PubMed:9819194). At high doses, the peptide is lethal to both fish and mice (PubMed:9819194).</text>
</comment>
<comment type="subcellular location">
    <subcellularLocation>
        <location evidence="3">Secreted</location>
    </subcellularLocation>
</comment>
<comment type="tissue specificity">
    <text evidence="11">Expressed by the venom duct.</text>
</comment>
<comment type="domain">
    <text evidence="9">The cysteine framework is IV (CC-C-C-C-C).</text>
</comment>
<comment type="PTM">
    <text evidence="10">Contains 3 disulfide bonds.</text>
</comment>
<comment type="PTM">
    <text evidence="2 11">O-linked glycan consists of Hex3-HexNAc2 pentasaccharide.</text>
</comment>
<comment type="mass spectrometry">
    <text>Monoisotopic mass.</text>
</comment>
<comment type="mass spectrometry"/>
<comment type="miscellaneous">
    <text evidence="2">Negative results: does not show activity on Kv1 channels from several sources expressed in Xenopus oocytes (Drosophila Shaker B c6-46, Xenopus XKv1.1 and XKv1.3, and Loligo SqKv1.1).</text>
</comment>
<comment type="similarity">
    <text evidence="9">Belongs to the conotoxin A superfamily.</text>
</comment>
<reference key="1">
    <citation type="journal article" date="2003" name="Toxicon">
        <title>cDNA cloning of two A-superfamily conotoxins from Conus striatus.</title>
        <authorList>
            <person name="Wang C.-Z."/>
            <person name="Jiang H."/>
            <person name="Ou Z.-L."/>
            <person name="Chen J.-S."/>
            <person name="Chi C.-W."/>
        </authorList>
    </citation>
    <scope>NUCLEOTIDE SEQUENCE [MRNA]</scope>
    <source>
        <tissue>Venom duct</tissue>
    </source>
</reference>
<reference key="2">
    <citation type="journal article" date="2004" name="J. Biol. Chem.">
        <title>The A-superfamily of conotoxins: structural and functional divergence.</title>
        <authorList>
            <person name="Santos A.D."/>
            <person name="McIntosh J.M."/>
            <person name="Hillyard D.R."/>
            <person name="Cruz L.J."/>
            <person name="Olivera B.M."/>
        </authorList>
    </citation>
    <scope>NUCLEOTIDE SEQUENCE [MRNA]</scope>
    <source>
        <strain>Isolate Philippines</strain>
        <tissue>Venom duct</tissue>
    </source>
</reference>
<reference key="3">
    <citation type="journal article" date="2006" name="Biochemistry">
        <title>Two toxins from Conus striatus that individually induce tetanic paralysis.</title>
        <authorList>
            <person name="Kelley W.P."/>
            <person name="Schulz J.R."/>
            <person name="Jakubowski J.A."/>
            <person name="Gilly W.F."/>
            <person name="Sweedler J.V."/>
        </authorList>
    </citation>
    <scope>NUCLEOTIDE SEQUENCE [MRNA]</scope>
    <scope>PROTEIN SEQUENCE OF 39-68</scope>
    <scope>FUNCTION</scope>
    <scope>BIOASSAY</scope>
    <scope>MASS SPECTROMETRY</scope>
    <scope>PYROGLUTAMATE FORMATION AT GLN-39</scope>
    <scope>GLYCOSYLATION AT SER-45</scope>
    <scope>HYDROXYLATION AT PRO-55; PRO-60 AND PRO-61</scope>
    <scope>AMIDATION AT CYS-68</scope>
    <source>
        <tissue>Venom</tissue>
        <tissue>Venom duct</tissue>
    </source>
</reference>
<reference key="4">
    <citation type="journal article" date="2006" name="Biochimie">
        <title>Analysis of expressed sequence tags from the venom ducts of Conus striatus: focusing on the expression profile of conotoxins.</title>
        <authorList>
            <person name="Pi C."/>
            <person name="Liu Y."/>
            <person name="Peng C."/>
            <person name="Jiang X."/>
            <person name="Liu J."/>
            <person name="Xu B."/>
            <person name="Yu X."/>
            <person name="Yu Y."/>
            <person name="Jiang X."/>
            <person name="Wang L."/>
            <person name="Dong M."/>
            <person name="Chen S."/>
            <person name="Xu A.-L."/>
        </authorList>
    </citation>
    <scope>NUCLEOTIDE SEQUENCE [MRNA]</scope>
    <source>
        <tissue>Venom duct</tissue>
    </source>
</reference>
<reference key="5">
    <citation type="journal article" date="1998" name="Biochemistry">
        <title>An O-glycosylated neuroexcitatory conus peptide.</title>
        <authorList>
            <person name="Craig A.G."/>
            <person name="Zafaralla G.C."/>
            <person name="Cruz L.J."/>
            <person name="Santos A.D."/>
            <person name="Hillyard D.R."/>
            <person name="Dykert J."/>
            <person name="Rivier J.E."/>
            <person name="Gray W.R."/>
            <person name="Imperial J.S."/>
            <person name="DelaCruz R.G."/>
            <person name="Sporning A."/>
            <person name="Terlau H."/>
            <person name="West P.J."/>
            <person name="Yoshikami D."/>
            <person name="Olivera B.M."/>
        </authorList>
    </citation>
    <scope>PROTEIN SEQUENCE OF 39-68</scope>
    <scope>FUNCTION</scope>
    <scope>BIOASSAY</scope>
    <scope>GLYCOSYLATION AT SER-45</scope>
    <scope>PYROGLUTAMATE FORMATION AT GLN-39</scope>
    <scope>AMIDATION AT CYS-68</scope>
    <scope>MASS SPECTROMETRY</scope>
    <scope>SUBCELLULAR LOCATION</scope>
    <source>
        <tissue>Venom</tissue>
    </source>
</reference>
<organism>
    <name type="scientific">Conus striatus</name>
    <name type="common">Striated cone</name>
    <dbReference type="NCBI Taxonomy" id="6493"/>
    <lineage>
        <taxon>Eukaryota</taxon>
        <taxon>Metazoa</taxon>
        <taxon>Spiralia</taxon>
        <taxon>Lophotrochozoa</taxon>
        <taxon>Mollusca</taxon>
        <taxon>Gastropoda</taxon>
        <taxon>Caenogastropoda</taxon>
        <taxon>Neogastropoda</taxon>
        <taxon>Conoidea</taxon>
        <taxon>Conidae</taxon>
        <taxon>Conus</taxon>
        <taxon>Pionoconus</taxon>
    </lineage>
</organism>
<protein>
    <recommendedName>
        <fullName evidence="9">Conotoxin SIVA</fullName>
    </recommendedName>
    <alternativeName>
        <fullName>Conotoxin S4.1</fullName>
    </alternativeName>
    <alternativeName>
        <fullName evidence="7">Conotoxin s4a</fullName>
    </alternativeName>
    <alternativeName>
        <fullName evidence="8">Kappa-conotoxin SIVA</fullName>
    </alternativeName>
    <alternativeName>
        <fullName evidence="4 5 6">KappaA-conotoxin</fullName>
    </alternativeName>
    <alternativeName>
        <fullName evidence="8">Spastic peptide</fullName>
    </alternativeName>
</protein>
<feature type="signal peptide" evidence="1">
    <location>
        <begin position="1"/>
        <end position="21"/>
    </location>
</feature>
<feature type="propeptide" id="PRO_0000034983" evidence="3">
    <location>
        <begin position="22"/>
        <end position="38"/>
    </location>
</feature>
<feature type="peptide" id="PRO_0000034984" description="Conotoxin SIVA" evidence="3">
    <location>
        <begin position="39"/>
        <end position="68"/>
    </location>
</feature>
<feature type="modified residue" description="Pyrrolidone carboxylic acid" evidence="2 3">
    <location>
        <position position="39"/>
    </location>
</feature>
<feature type="modified residue" description="4-hydroxyproline" evidence="2">
    <location>
        <position position="55"/>
    </location>
</feature>
<feature type="modified residue" description="4-hydroxyproline" evidence="2">
    <location>
        <position position="60"/>
    </location>
</feature>
<feature type="modified residue" description="4-hydroxyproline" evidence="2">
    <location>
        <position position="61"/>
    </location>
</feature>
<feature type="modified residue" description="Cysteine amide" evidence="2 3">
    <location>
        <position position="68"/>
    </location>
</feature>
<feature type="glycosylation site" description="O-linked (HexNAc...) serine" evidence="2 3">
    <location>
        <position position="45"/>
    </location>
</feature>
<feature type="sequence conflict" description="In Ref. 4." evidence="9" ref="4">
    <original>G</original>
    <variation>D</variation>
    <location>
        <position position="2"/>
    </location>
</feature>
<feature type="sequence conflict" description="In Ref. 3 and 4." evidence="9" ref="3 4">
    <original>T</original>
    <variation>N</variation>
    <location>
        <position position="18"/>
    </location>
</feature>
<feature type="sequence conflict" description="In Ref. 4." evidence="9" ref="4">
    <original>P</original>
    <variation>H</variation>
    <location>
        <position position="44"/>
    </location>
</feature>
<sequence>MGMRMMFTVFLLVVLATTVVSTPSDRASDGRNAAVHERQKSLVPSVITTCCGYDPGTMCPPCRCTNSCG</sequence>
<proteinExistence type="evidence at protein level"/>
<keyword id="KW-0027">Amidation</keyword>
<keyword id="KW-0903">Direct protein sequencing</keyword>
<keyword id="KW-1015">Disulfide bond</keyword>
<keyword id="KW-0325">Glycoprotein</keyword>
<keyword id="KW-0379">Hydroxylation</keyword>
<keyword id="KW-0872">Ion channel impairing toxin</keyword>
<keyword id="KW-0528">Neurotoxin</keyword>
<keyword id="KW-0873">Pyrrolidone carboxylic acid</keyword>
<keyword id="KW-0964">Secreted</keyword>
<keyword id="KW-0732">Signal</keyword>
<keyword id="KW-0800">Toxin</keyword>
<keyword id="KW-0738">Voltage-gated sodium channel impairing toxin</keyword>
<dbReference type="EMBL" id="AY166873">
    <property type="protein sequence ID" value="AAN86573.1"/>
    <property type="molecule type" value="mRNA"/>
</dbReference>
<dbReference type="SMR" id="P0C828"/>
<dbReference type="iPTMnet" id="P0C828"/>
<dbReference type="ConoServer" id="94">
    <property type="toxin name" value="SIVA precursor"/>
</dbReference>
<dbReference type="GO" id="GO:0005576">
    <property type="term" value="C:extracellular region"/>
    <property type="evidence" value="ECO:0007669"/>
    <property type="project" value="UniProtKB-SubCell"/>
</dbReference>
<dbReference type="GO" id="GO:0030550">
    <property type="term" value="F:acetylcholine receptor inhibitor activity"/>
    <property type="evidence" value="ECO:0007669"/>
    <property type="project" value="InterPro"/>
</dbReference>
<dbReference type="GO" id="GO:0017080">
    <property type="term" value="F:sodium channel regulator activity"/>
    <property type="evidence" value="ECO:0007669"/>
    <property type="project" value="UniProtKB-KW"/>
</dbReference>
<dbReference type="GO" id="GO:0090729">
    <property type="term" value="F:toxin activity"/>
    <property type="evidence" value="ECO:0007669"/>
    <property type="project" value="UniProtKB-KW"/>
</dbReference>
<dbReference type="InterPro" id="IPR009958">
    <property type="entry name" value="Conotoxin_a-typ"/>
</dbReference>
<dbReference type="Pfam" id="PF07365">
    <property type="entry name" value="Toxin_8"/>
    <property type="match status" value="1"/>
</dbReference>